<organism evidence="16">
    <name type="scientific">Caenorhabditis elegans</name>
    <dbReference type="NCBI Taxonomy" id="6239"/>
    <lineage>
        <taxon>Eukaryota</taxon>
        <taxon>Metazoa</taxon>
        <taxon>Ecdysozoa</taxon>
        <taxon>Nematoda</taxon>
        <taxon>Chromadorea</taxon>
        <taxon>Rhabditida</taxon>
        <taxon>Rhabditina</taxon>
        <taxon>Rhabditomorpha</taxon>
        <taxon>Rhabditoidea</taxon>
        <taxon>Rhabditidae</taxon>
        <taxon>Peloderinae</taxon>
        <taxon>Caenorhabditis</taxon>
    </lineage>
</organism>
<reference evidence="16" key="1">
    <citation type="journal article" date="1998" name="Science">
        <title>Genome sequence of the nematode C. elegans: a platform for investigating biology.</title>
        <authorList>
            <consortium name="The C. elegans sequencing consortium"/>
        </authorList>
    </citation>
    <scope>NUCLEOTIDE SEQUENCE [LARGE SCALE GENOMIC DNA]</scope>
    <source>
        <strain evidence="16">Bristol N2</strain>
    </source>
</reference>
<reference evidence="15" key="2">
    <citation type="journal article" date="1998" name="Gene">
        <title>Cloning of three Caenorhabditis elegans genes potentially encoding novel matrix metalloproteinases.</title>
        <authorList>
            <person name="Wada K."/>
            <person name="Sato H."/>
            <person name="Kinoh H."/>
            <person name="Kajita M."/>
            <person name="Yamamoto H."/>
            <person name="Seiki M."/>
        </authorList>
    </citation>
    <scope>NUCLEOTIDE SEQUENCE [MRNA] OF 60-519 (ISOFORM A)</scope>
    <scope>CATALYTIC ACTIVITY</scope>
    <scope>ACTIVITY REGULATION</scope>
    <source>
        <strain evidence="15">Bristol N2</strain>
    </source>
</reference>
<reference evidence="12" key="3">
    <citation type="journal article" date="2010" name="Dev. Comp. Immunol.">
        <title>Role of matrix metalloproteinase ZMP-2 in pathogen resistance and development in Caenorhabditis elegans.</title>
        <authorList>
            <person name="Altincicek B."/>
            <person name="Fischer M."/>
            <person name="Fischer M."/>
            <person name="Lueersen K."/>
            <person name="Boll M."/>
            <person name="Wenzel U."/>
            <person name="Vilcinskas A."/>
        </authorList>
    </citation>
    <scope>FUNCTION</scope>
    <scope>TISSUE SPECIFICITY</scope>
    <scope>DEVELOPMENTAL STAGE</scope>
    <scope>DISRUPTION PHENOTYPE</scope>
</reference>
<reference evidence="12" key="4">
    <citation type="journal article" date="2014" name="Genes Nutr.">
        <title>The zinc matrix metalloproteinase ZMP-2 increases survival of Caenorhabditis elegans through interference with lipoprotein absorption.</title>
        <authorList>
            <person name="Fischer M."/>
            <person name="Fitzenberger E."/>
            <person name="Kull R."/>
            <person name="Boll M."/>
            <person name="Wenzel U."/>
        </authorList>
    </citation>
    <scope>FUNCTION</scope>
    <scope>SUBCELLULAR LOCATION</scope>
    <scope>DISRUPTION PHENOTYPE</scope>
</reference>
<feature type="signal peptide" evidence="5">
    <location>
        <begin position="1"/>
        <end position="26"/>
    </location>
</feature>
<feature type="propeptide" id="PRO_0000439232" description="Activation peptide" evidence="4">
    <location>
        <begin position="27"/>
        <end position="126"/>
    </location>
</feature>
<feature type="chain" id="PRO_5004158457" description="Matrix metalloproteinase-B" evidence="12">
    <location>
        <begin position="126"/>
        <end position="519"/>
    </location>
</feature>
<feature type="region of interest" description="Disordered" evidence="7">
    <location>
        <begin position="29"/>
        <end position="50"/>
    </location>
</feature>
<feature type="region of interest" description="Disordered" evidence="7">
    <location>
        <begin position="391"/>
        <end position="410"/>
    </location>
</feature>
<feature type="short sequence motif" description="Cysteine switch" evidence="2">
    <location>
        <begin position="109"/>
        <end position="116"/>
    </location>
</feature>
<feature type="compositionally biased region" description="Polar residues" evidence="7">
    <location>
        <begin position="29"/>
        <end position="39"/>
    </location>
</feature>
<feature type="compositionally biased region" description="Basic and acidic residues" evidence="7">
    <location>
        <begin position="391"/>
        <end position="402"/>
    </location>
</feature>
<feature type="active site" evidence="3">
    <location>
        <position position="277"/>
    </location>
</feature>
<feature type="binding site" description="in inhibited form" evidence="1">
    <location>
        <position position="111"/>
    </location>
    <ligand>
        <name>Zn(2+)</name>
        <dbReference type="ChEBI" id="CHEBI:29105"/>
        <label>2</label>
        <note>catalytic</note>
    </ligand>
</feature>
<feature type="binding site" evidence="1">
    <location>
        <position position="208"/>
    </location>
    <ligand>
        <name>Zn(2+)</name>
        <dbReference type="ChEBI" id="CHEBI:29105"/>
        <label>1</label>
    </ligand>
</feature>
<feature type="binding site" evidence="1">
    <location>
        <position position="210"/>
    </location>
    <ligand>
        <name>Zn(2+)</name>
        <dbReference type="ChEBI" id="CHEBI:29105"/>
        <label>1</label>
    </ligand>
</feature>
<feature type="binding site" evidence="1">
    <location>
        <position position="232"/>
    </location>
    <ligand>
        <name>Zn(2+)</name>
        <dbReference type="ChEBI" id="CHEBI:29105"/>
        <label>1</label>
    </ligand>
</feature>
<feature type="binding site" evidence="1">
    <location>
        <position position="247"/>
    </location>
    <ligand>
        <name>Zn(2+)</name>
        <dbReference type="ChEBI" id="CHEBI:29105"/>
        <label>1</label>
    </ligand>
</feature>
<feature type="binding site" evidence="1">
    <location>
        <position position="276"/>
    </location>
    <ligand>
        <name>Zn(2+)</name>
        <dbReference type="ChEBI" id="CHEBI:29105"/>
        <label>2</label>
        <note>catalytic</note>
    </ligand>
</feature>
<feature type="binding site" evidence="1">
    <location>
        <position position="280"/>
    </location>
    <ligand>
        <name>Zn(2+)</name>
        <dbReference type="ChEBI" id="CHEBI:29105"/>
        <label>2</label>
        <note>catalytic</note>
    </ligand>
</feature>
<feature type="binding site" evidence="1">
    <location>
        <position position="286"/>
    </location>
    <ligand>
        <name>Zn(2+)</name>
        <dbReference type="ChEBI" id="CHEBI:29105"/>
        <label>2</label>
        <note>catalytic</note>
    </ligand>
</feature>
<feature type="glycosylation site" description="N-linked (GlcNAc...) asparagine" evidence="6">
    <location>
        <position position="341"/>
    </location>
</feature>
<feature type="glycosylation site" description="N-linked (GlcNAc...) asparagine" evidence="6">
    <location>
        <position position="408"/>
    </location>
</feature>
<feature type="splice variant" id="VSP_058808" description="In isoform c." evidence="12">
    <original>MTKWSPNGNPLSTIYLILSLFTLAHTAPTTQHSRTTTQLRLEDEDGGGGVDEDSIHFVKGQMEKYGYLKGIDHSSPQEFRQALMFFQ</original>
    <variation>MARCRRISGGGIRQKVFNTHNCASFSGSNGKVWLSQRHRSLVTARISASSHVLPS</variation>
    <location>
        <begin position="1"/>
        <end position="87"/>
    </location>
</feature>
<feature type="splice variant" id="VSP_058809" description="In isoform b." evidence="12">
    <original>EVLEVEQTGNVDEM</original>
    <variation>VKFSRWNRLETSMR</variation>
    <location>
        <begin position="88"/>
        <end position="101"/>
    </location>
</feature>
<feature type="splice variant" id="VSP_058810" description="In isoform b." evidence="12">
    <location>
        <begin position="102"/>
        <end position="519"/>
    </location>
</feature>
<feature type="splice variant" id="VSP_058811" description="In isoform c.">
    <original>SEGFFLFQLKFPHSTLTHTDDVVMREKDKRSYRGD</original>
    <variation>N</variation>
    <location>
        <begin position="365"/>
        <end position="399"/>
    </location>
</feature>
<feature type="sequence conflict" description="In Ref. 2; BAA28352." evidence="12" ref="2">
    <original>H</original>
    <variation>D</variation>
    <location>
        <position position="348"/>
    </location>
</feature>
<feature type="sequence conflict" description="In Ref. 2; BAA28352." evidence="12" ref="2">
    <location>
        <begin position="365"/>
        <end position="398"/>
    </location>
</feature>
<feature type="sequence conflict" description="In Ref. 2; BAA28352." evidence="12" ref="2">
    <original>T</original>
    <variation>A</variation>
    <location>
        <position position="435"/>
    </location>
</feature>
<gene>
    <name evidence="17" type="primary">zmp-2</name>
    <name evidence="17" type="ORF">H19M22.3</name>
</gene>
<name>MMPB_CAEEL</name>
<dbReference type="EC" id="3.4.24.-" evidence="10"/>
<dbReference type="EMBL" id="BX284603">
    <property type="protein sequence ID" value="CCD72394.1"/>
    <property type="molecule type" value="Genomic_DNA"/>
</dbReference>
<dbReference type="EMBL" id="BX284603">
    <property type="protein sequence ID" value="CCD72395.1"/>
    <property type="molecule type" value="Genomic_DNA"/>
</dbReference>
<dbReference type="EMBL" id="BX284603">
    <property type="protein sequence ID" value="CCD72396.1"/>
    <property type="molecule type" value="Genomic_DNA"/>
</dbReference>
<dbReference type="EMBL" id="AB007816">
    <property type="protein sequence ID" value="BAA28352.1"/>
    <property type="status" value="ALT_SEQ"/>
    <property type="molecule type" value="mRNA"/>
</dbReference>
<dbReference type="PIR" id="T37250">
    <property type="entry name" value="T37250"/>
</dbReference>
<dbReference type="RefSeq" id="NP_001360085.1">
    <molecule id="O44836-2"/>
    <property type="nucleotide sequence ID" value="NM_001373860.1"/>
</dbReference>
<dbReference type="RefSeq" id="NP_497594.1">
    <molecule id="O44836-1"/>
    <property type="nucleotide sequence ID" value="NM_065193.6"/>
</dbReference>
<dbReference type="RefSeq" id="NP_497595.1">
    <property type="nucleotide sequence ID" value="NM_065194.3"/>
</dbReference>
<dbReference type="RefSeq" id="NP_497596.2">
    <molecule id="O44836-3"/>
    <property type="nucleotide sequence ID" value="NM_065195.5"/>
</dbReference>
<dbReference type="SMR" id="O44836"/>
<dbReference type="FunCoup" id="O44836">
    <property type="interactions" value="15"/>
</dbReference>
<dbReference type="STRING" id="6239.H19M22.3a.1"/>
<dbReference type="MEROPS" id="M10.068"/>
<dbReference type="GlyCosmos" id="O44836">
    <property type="glycosylation" value="2 sites, No reported glycans"/>
</dbReference>
<dbReference type="PaxDb" id="6239-H19M22.3a"/>
<dbReference type="EnsemblMetazoa" id="H19M22.3a.1">
    <molecule id="O44836-1"/>
    <property type="protein sequence ID" value="H19M22.3a.1"/>
    <property type="gene ID" value="WBGene00019212"/>
</dbReference>
<dbReference type="EnsemblMetazoa" id="H19M22.3b.1">
    <molecule id="O44836-2"/>
    <property type="protein sequence ID" value="H19M22.3b.1"/>
    <property type="gene ID" value="WBGene00019212"/>
</dbReference>
<dbReference type="EnsemblMetazoa" id="H19M22.3c.1">
    <molecule id="O44836-3"/>
    <property type="protein sequence ID" value="H19M22.3c.1"/>
    <property type="gene ID" value="WBGene00019212"/>
</dbReference>
<dbReference type="GeneID" id="175383"/>
<dbReference type="KEGG" id="cel:CELE_H19M22.3"/>
<dbReference type="UCSC" id="H19M22.3a">
    <property type="organism name" value="c. elegans"/>
</dbReference>
<dbReference type="AGR" id="WB:WBGene00019212"/>
<dbReference type="CTD" id="175383"/>
<dbReference type="WormBase" id="H19M22.3a">
    <molecule id="O44836-1"/>
    <property type="protein sequence ID" value="CE26937"/>
    <property type="gene ID" value="WBGene00019212"/>
    <property type="gene designation" value="zmp-2"/>
</dbReference>
<dbReference type="WormBase" id="H19M22.3b">
    <molecule id="O44836-2"/>
    <property type="protein sequence ID" value="CE29414"/>
    <property type="gene ID" value="WBGene00019212"/>
    <property type="gene designation" value="zmp-2"/>
</dbReference>
<dbReference type="WormBase" id="H19M22.3c">
    <molecule id="O44836-3"/>
    <property type="protein sequence ID" value="CE34904"/>
    <property type="gene ID" value="WBGene00019212"/>
    <property type="gene designation" value="zmp-2"/>
</dbReference>
<dbReference type="eggNOG" id="KOG1565">
    <property type="taxonomic scope" value="Eukaryota"/>
</dbReference>
<dbReference type="HOGENOM" id="CLU_656062_0_0_1"/>
<dbReference type="InParanoid" id="O44836"/>
<dbReference type="OMA" id="ALMHPYY"/>
<dbReference type="OrthoDB" id="7550572at2759"/>
<dbReference type="PhylomeDB" id="O44836"/>
<dbReference type="Reactome" id="R-CEL-1442490">
    <property type="pathway name" value="Collagen degradation"/>
</dbReference>
<dbReference type="Reactome" id="R-CEL-1474228">
    <property type="pathway name" value="Degradation of the extracellular matrix"/>
</dbReference>
<dbReference type="Reactome" id="R-CEL-1592389">
    <property type="pathway name" value="Activation of Matrix Metalloproteinases"/>
</dbReference>
<dbReference type="Reactome" id="R-CEL-210991">
    <property type="pathway name" value="Basigin interactions"/>
</dbReference>
<dbReference type="Reactome" id="R-CEL-2168880">
    <property type="pathway name" value="Scavenging of heme from plasma"/>
</dbReference>
<dbReference type="Reactome" id="R-CEL-2179392">
    <property type="pathway name" value="EGFR Transactivation by Gastrin"/>
</dbReference>
<dbReference type="Reactome" id="R-CEL-3928665">
    <property type="pathway name" value="EPH-ephrin mediated repulsion of cells"/>
</dbReference>
<dbReference type="Reactome" id="R-CEL-6798695">
    <property type="pathway name" value="Neutrophil degranulation"/>
</dbReference>
<dbReference type="PRO" id="PR:O44836"/>
<dbReference type="Proteomes" id="UP000001940">
    <property type="component" value="Chromosome III"/>
</dbReference>
<dbReference type="Bgee" id="WBGene00019212">
    <property type="expression patterns" value="Expressed in pharyngeal muscle cell (C elegans) and 3 other cell types or tissues"/>
</dbReference>
<dbReference type="GO" id="GO:0031012">
    <property type="term" value="C:extracellular matrix"/>
    <property type="evidence" value="ECO:0007669"/>
    <property type="project" value="InterPro"/>
</dbReference>
<dbReference type="GO" id="GO:0005615">
    <property type="term" value="C:extracellular space"/>
    <property type="evidence" value="ECO:0000318"/>
    <property type="project" value="GO_Central"/>
</dbReference>
<dbReference type="GO" id="GO:0004222">
    <property type="term" value="F:metalloendopeptidase activity"/>
    <property type="evidence" value="ECO:0000318"/>
    <property type="project" value="GO_Central"/>
</dbReference>
<dbReference type="GO" id="GO:0008237">
    <property type="term" value="F:metallopeptidase activity"/>
    <property type="evidence" value="ECO:0000315"/>
    <property type="project" value="UniProtKB"/>
</dbReference>
<dbReference type="GO" id="GO:0008270">
    <property type="term" value="F:zinc ion binding"/>
    <property type="evidence" value="ECO:0007669"/>
    <property type="project" value="InterPro"/>
</dbReference>
<dbReference type="GO" id="GO:0030574">
    <property type="term" value="P:collagen catabolic process"/>
    <property type="evidence" value="ECO:0000318"/>
    <property type="project" value="GO_Central"/>
</dbReference>
<dbReference type="GO" id="GO:0050829">
    <property type="term" value="P:defense response to Gram-negative bacterium"/>
    <property type="evidence" value="ECO:0000315"/>
    <property type="project" value="UniProtKB"/>
</dbReference>
<dbReference type="GO" id="GO:0008340">
    <property type="term" value="P:determination of adult lifespan"/>
    <property type="evidence" value="ECO:0000315"/>
    <property type="project" value="UniProtKB"/>
</dbReference>
<dbReference type="GO" id="GO:0042395">
    <property type="term" value="P:ecdysis, collagen and cuticulin-based cuticle"/>
    <property type="evidence" value="ECO:0000315"/>
    <property type="project" value="UniProtKB"/>
</dbReference>
<dbReference type="GO" id="GO:0030198">
    <property type="term" value="P:extracellular matrix organization"/>
    <property type="evidence" value="ECO:0000318"/>
    <property type="project" value="GO_Central"/>
</dbReference>
<dbReference type="GO" id="GO:0010286">
    <property type="term" value="P:heat acclimation"/>
    <property type="evidence" value="ECO:0000315"/>
    <property type="project" value="UniProtKB"/>
</dbReference>
<dbReference type="GO" id="GO:0002164">
    <property type="term" value="P:larval development"/>
    <property type="evidence" value="ECO:0000315"/>
    <property type="project" value="UniProtKB"/>
</dbReference>
<dbReference type="GO" id="GO:0042308">
    <property type="term" value="P:negative regulation of protein import into nucleus"/>
    <property type="evidence" value="ECO:0000315"/>
    <property type="project" value="UniProtKB"/>
</dbReference>
<dbReference type="GO" id="GO:1904807">
    <property type="term" value="P:negative regulation of protein oxidation"/>
    <property type="evidence" value="ECO:0000315"/>
    <property type="project" value="UniProtKB"/>
</dbReference>
<dbReference type="GO" id="GO:1903427">
    <property type="term" value="P:negative regulation of reactive oxygen species biosynthetic process"/>
    <property type="evidence" value="ECO:0000315"/>
    <property type="project" value="UniProtKB"/>
</dbReference>
<dbReference type="GO" id="GO:1900036">
    <property type="term" value="P:positive regulation of cellular response to heat"/>
    <property type="evidence" value="ECO:0000315"/>
    <property type="project" value="UniProtKB"/>
</dbReference>
<dbReference type="GO" id="GO:1904109">
    <property type="term" value="P:positive regulation of cholesterol import"/>
    <property type="evidence" value="ECO:0000315"/>
    <property type="project" value="UniProtKB"/>
</dbReference>
<dbReference type="GO" id="GO:1904000">
    <property type="term" value="P:positive regulation of eating behavior"/>
    <property type="evidence" value="ECO:0000315"/>
    <property type="project" value="UniProtKB"/>
</dbReference>
<dbReference type="GO" id="GO:0010628">
    <property type="term" value="P:positive regulation of gene expression"/>
    <property type="evidence" value="ECO:0000315"/>
    <property type="project" value="UniProtKB"/>
</dbReference>
<dbReference type="GO" id="GO:0040017">
    <property type="term" value="P:positive regulation of locomotion"/>
    <property type="evidence" value="ECO:0000315"/>
    <property type="project" value="UniProtKB"/>
</dbReference>
<dbReference type="GO" id="GO:0006508">
    <property type="term" value="P:proteolysis"/>
    <property type="evidence" value="ECO:0007669"/>
    <property type="project" value="UniProtKB-KW"/>
</dbReference>
<dbReference type="CDD" id="cd04278">
    <property type="entry name" value="ZnMc_MMP"/>
    <property type="match status" value="1"/>
</dbReference>
<dbReference type="FunFam" id="3.40.390.10:FF:000121">
    <property type="entry name" value="Matrix metalloproteinase-B"/>
    <property type="match status" value="1"/>
</dbReference>
<dbReference type="Gene3D" id="3.40.390.10">
    <property type="entry name" value="Collagenase (Catalytic Domain)"/>
    <property type="match status" value="1"/>
</dbReference>
<dbReference type="InterPro" id="IPR033739">
    <property type="entry name" value="M10A_MMP"/>
</dbReference>
<dbReference type="InterPro" id="IPR024079">
    <property type="entry name" value="MetalloPept_cat_dom_sf"/>
</dbReference>
<dbReference type="InterPro" id="IPR001818">
    <property type="entry name" value="Pept_M10_metallopeptidase"/>
</dbReference>
<dbReference type="InterPro" id="IPR021190">
    <property type="entry name" value="Pept_M10A"/>
</dbReference>
<dbReference type="InterPro" id="IPR006026">
    <property type="entry name" value="Peptidase_Metallo"/>
</dbReference>
<dbReference type="InterPro" id="IPR036365">
    <property type="entry name" value="PGBD-like_sf"/>
</dbReference>
<dbReference type="PANTHER" id="PTHR10201">
    <property type="entry name" value="MATRIX METALLOPROTEINASE"/>
    <property type="match status" value="1"/>
</dbReference>
<dbReference type="PANTHER" id="PTHR10201:SF291">
    <property type="entry name" value="MATRIX METALLOPROTEINASE 1, ISOFORM C-RELATED"/>
    <property type="match status" value="1"/>
</dbReference>
<dbReference type="Pfam" id="PF00413">
    <property type="entry name" value="Peptidase_M10"/>
    <property type="match status" value="1"/>
</dbReference>
<dbReference type="PRINTS" id="PR00138">
    <property type="entry name" value="MATRIXIN"/>
</dbReference>
<dbReference type="SMART" id="SM00235">
    <property type="entry name" value="ZnMc"/>
    <property type="match status" value="1"/>
</dbReference>
<dbReference type="SUPFAM" id="SSF55486">
    <property type="entry name" value="Metalloproteases ('zincins'), catalytic domain"/>
    <property type="match status" value="1"/>
</dbReference>
<dbReference type="SUPFAM" id="SSF47090">
    <property type="entry name" value="PGBD-like"/>
    <property type="match status" value="1"/>
</dbReference>
<dbReference type="PROSITE" id="PS00142">
    <property type="entry name" value="ZINC_PROTEASE"/>
    <property type="match status" value="1"/>
</dbReference>
<accession>O44836</accession>
<accession>H2L0C2</accession>
<accession>O61265</accession>
<accession>Q95X57</accession>
<sequence>MTKWSPNGNPLSTIYLILSLFTLAHTAPTTQHSRTTTQLRLEDEDGGGGVDEDSIHFVKGQMEKYGYLKGIDHSSPQEFRQALMFFQEVLEVEQTGNVDEMTVEAASKPRCTQTDVRQEQTKRTKRFTLSKRAKWAHASGQSVTLKWYISDYTSDIDRLETRKVVEKAFKLWSSQSYIKNEKKVTLTFQEASSKDEADINILWAEGNHGDEHDFDGANGKIEGNKKENVLAHTFFPGYARPLNGDIHFDDAEDWEIDVDQVGHGSNKRFFPYVLAHEIGHALGLDHSQKADALMHPYYKNVPINEIQLDIDDKCGVIWNYGGASDFCLYVWLMSQIVEAHNSSAQNNHGVGSITSSRTNKKSFKSEGFFLFQLKFPHSTLTHTDDVVMREKDKRSYRGDSKIPKCSSNNSSQRTLAEKKLTLGLHLSEADAKRYTEMVCNFLAGLHMWRTNPNHHASESLEKEYKGVSQEMGTFSGKSIAVRRLIRHAEHQKERSEKGPLDPDYFDDDFFENFFMEYSK</sequence>
<comment type="function">
    <text evidence="8 9">Metalloprotease involved in molting, a process during larval stages in which a new cuticle is formed and the old cuticle is shed (PubMed:24957743). Plays a role in thermotolerance probably by preventing the accumulation of oxidized lipoproteins and cholesterol (PubMed:20600277, PubMed:24957743).</text>
</comment>
<comment type="cofactor">
    <cofactor evidence="1">
        <name>Zn(2+)</name>
        <dbReference type="ChEBI" id="CHEBI:29105"/>
    </cofactor>
</comment>
<comment type="activity regulation">
    <text evidence="10">Inhibited by human TIMP1 and TIMP2 and the broad MMP inhibitors BB94 (Batimastat) and CT543.</text>
</comment>
<comment type="subcellular location">
    <subcellularLocation>
        <location evidence="13">Secreted</location>
        <location evidence="13">Extracellular space</location>
        <location evidence="13">Extracellular matrix</location>
    </subcellularLocation>
</comment>
<comment type="alternative products">
    <event type="alternative splicing"/>
    <isoform>
        <id>O44836-1</id>
        <name evidence="17">a</name>
        <sequence type="displayed"/>
    </isoform>
    <isoform>
        <id>O44836-2</id>
        <name evidence="18">b</name>
        <sequence type="described" ref="VSP_058809 VSP_058810"/>
    </isoform>
    <isoform>
        <id>O44836-3</id>
        <name evidence="19">c</name>
        <sequence type="described" ref="VSP_058808 VSP_058811"/>
    </isoform>
</comment>
<comment type="tissue specificity">
    <text evidence="8">Expressed in spermatheca and spermathecal-uterine valve, weakly in vulva and anal muscles and in two cells in the head (probably RMEV and RMED motor neurons).</text>
</comment>
<comment type="developmental stage">
    <text evidence="8">Expressed at the comma, 1.5-fold and 3-fold embryonic stages in multiple cells including muscle and somatic gonad cells. In L1 larvae, predominantly expressed in specific muscles and somatic gonad cells, in L2 larvae predominantly expressed in muscles cells and in L4 larvae expressed predominantly in the developing spermatheca and more weakly in vulva muscle cells. Expression increases in the hypodermis in dauer stage larvae prior molting to L4 larval stage.</text>
</comment>
<comment type="domain">
    <text evidence="1">The conserved cysteine present in the cysteine-switch motif binds the catalytic zinc ion, thus inhibiting the enzyme. The dissociation of the cysteine from the zinc ion upon the activation-peptide release activates the enzyme.</text>
</comment>
<comment type="disruption phenotype">
    <text evidence="8 9">RNAi-mediated knockdown causes a delay in larval to adult development with reduced motility and feeding (PubMed:20600277). Also reduces fecundity in adults (PubMed:20600277). Larvae have molting defects characterized by incomplete cuticle shedding leaving a constriction ring in the larvae anterior part (PubMed:20600277). Reduces survival upon Gram-negative bacterium P.luminescense infection or heat stress (PubMed:20600277, PubMed:24957743). Production of extra- and intra-cellular reactive oxygen species (ROS) and protein oxidation are increased whereas vit-6 transcription and dehydroergosterol (DHE) uptake are reduced (PubMed:24957743). Moreover, causes constitutive daf-16 nuclear localization (PubMed:24957743). Simultaneous RNAi-mediated knockdown of vit-6, rme-2, daf-16 or daf-16 coactivators sir2.1, ftt-2 and par-2 restores normal thermotolerance (PubMed:24957743). RNAi-mediated knockdown in a daf-9 or daf-12 mutant background reduces survival further upon heat stress.</text>
</comment>
<comment type="similarity">
    <text evidence="5">Belongs to the peptidase M10A family.</text>
</comment>
<comment type="sequence caution" evidence="12">
    <conflict type="miscellaneous discrepancy">
        <sequence resource="EMBL-CDS" id="BAA28352"/>
    </conflict>
    <text>Intron retention.</text>
</comment>
<keyword id="KW-0025">Alternative splicing</keyword>
<keyword id="KW-0165">Cleavage on pair of basic residues</keyword>
<keyword id="KW-0272">Extracellular matrix</keyword>
<keyword id="KW-0325">Glycoprotein</keyword>
<keyword id="KW-0378">Hydrolase</keyword>
<keyword id="KW-0479">Metal-binding</keyword>
<keyword id="KW-0482">Metalloprotease</keyword>
<keyword id="KW-0645">Protease</keyword>
<keyword id="KW-1185">Reference proteome</keyword>
<keyword id="KW-0964">Secreted</keyword>
<keyword id="KW-0732">Signal</keyword>
<keyword id="KW-0862">Zinc</keyword>
<keyword id="KW-0865">Zymogen</keyword>
<proteinExistence type="evidence at protein level"/>
<protein>
    <recommendedName>
        <fullName evidence="14">Matrix metalloproteinase-B</fullName>
        <shortName evidence="14">MMP-B</shortName>
        <shortName evidence="11">MMP-H19</shortName>
        <ecNumber evidence="10">3.4.24.-</ecNumber>
    </recommendedName>
    <alternativeName>
        <fullName evidence="17">Zinc metalloprotease 2</fullName>
    </alternativeName>
</protein>
<evidence type="ECO:0000250" key="1">
    <source>
        <dbReference type="UniProtKB" id="P03956"/>
    </source>
</evidence>
<evidence type="ECO:0000250" key="2">
    <source>
        <dbReference type="UniProtKB" id="P03957"/>
    </source>
</evidence>
<evidence type="ECO:0000250" key="3">
    <source>
        <dbReference type="UniProtKB" id="P09238"/>
    </source>
</evidence>
<evidence type="ECO:0000250" key="4">
    <source>
        <dbReference type="UniProtKB" id="P50281"/>
    </source>
</evidence>
<evidence type="ECO:0000255" key="5"/>
<evidence type="ECO:0000255" key="6">
    <source>
        <dbReference type="PROSITE-ProRule" id="PRU00498"/>
    </source>
</evidence>
<evidence type="ECO:0000256" key="7">
    <source>
        <dbReference type="SAM" id="MobiDB-lite"/>
    </source>
</evidence>
<evidence type="ECO:0000269" key="8">
    <source>
    </source>
</evidence>
<evidence type="ECO:0000269" key="9">
    <source>
    </source>
</evidence>
<evidence type="ECO:0000269" key="10">
    <source>
    </source>
</evidence>
<evidence type="ECO:0000303" key="11">
    <source>
    </source>
</evidence>
<evidence type="ECO:0000305" key="12"/>
<evidence type="ECO:0000305" key="13">
    <source>
    </source>
</evidence>
<evidence type="ECO:0000305" key="14">
    <source>
    </source>
</evidence>
<evidence type="ECO:0000312" key="15">
    <source>
        <dbReference type="EMBL" id="BAA28352.1"/>
    </source>
</evidence>
<evidence type="ECO:0000312" key="16">
    <source>
        <dbReference type="Proteomes" id="UP000001940"/>
    </source>
</evidence>
<evidence type="ECO:0000312" key="17">
    <source>
        <dbReference type="WormBase" id="H19M22.3a"/>
    </source>
</evidence>
<evidence type="ECO:0000312" key="18">
    <source>
        <dbReference type="WormBase" id="H19M22.3b"/>
    </source>
</evidence>
<evidence type="ECO:0000312" key="19">
    <source>
        <dbReference type="WormBase" id="H19M22.3c"/>
    </source>
</evidence>